<comment type="function">
    <text evidence="1">Pyrophosphatase that catalyzes the hydrolysis of nucleoside triphosphates to their monophosphate derivatives, with a high preference for the non-canonical purine nucleotides XTP (xanthosine triphosphate), dITP (deoxyinosine triphosphate) and ITP. Seems to function as a house-cleaning enzyme that removes non-canonical purine nucleotides from the nucleotide pool, thus preventing their incorporation into DNA/RNA and avoiding chromosomal lesions.</text>
</comment>
<comment type="catalytic activity">
    <reaction evidence="1">
        <text>XTP + H2O = XMP + diphosphate + H(+)</text>
        <dbReference type="Rhea" id="RHEA:28610"/>
        <dbReference type="ChEBI" id="CHEBI:15377"/>
        <dbReference type="ChEBI" id="CHEBI:15378"/>
        <dbReference type="ChEBI" id="CHEBI:33019"/>
        <dbReference type="ChEBI" id="CHEBI:57464"/>
        <dbReference type="ChEBI" id="CHEBI:61314"/>
        <dbReference type="EC" id="3.6.1.66"/>
    </reaction>
</comment>
<comment type="catalytic activity">
    <reaction evidence="1">
        <text>dITP + H2O = dIMP + diphosphate + H(+)</text>
        <dbReference type="Rhea" id="RHEA:28342"/>
        <dbReference type="ChEBI" id="CHEBI:15377"/>
        <dbReference type="ChEBI" id="CHEBI:15378"/>
        <dbReference type="ChEBI" id="CHEBI:33019"/>
        <dbReference type="ChEBI" id="CHEBI:61194"/>
        <dbReference type="ChEBI" id="CHEBI:61382"/>
        <dbReference type="EC" id="3.6.1.66"/>
    </reaction>
</comment>
<comment type="catalytic activity">
    <reaction evidence="1">
        <text>ITP + H2O = IMP + diphosphate + H(+)</text>
        <dbReference type="Rhea" id="RHEA:29399"/>
        <dbReference type="ChEBI" id="CHEBI:15377"/>
        <dbReference type="ChEBI" id="CHEBI:15378"/>
        <dbReference type="ChEBI" id="CHEBI:33019"/>
        <dbReference type="ChEBI" id="CHEBI:58053"/>
        <dbReference type="ChEBI" id="CHEBI:61402"/>
        <dbReference type="EC" id="3.6.1.66"/>
    </reaction>
</comment>
<comment type="cofactor">
    <cofactor evidence="1">
        <name>Mg(2+)</name>
        <dbReference type="ChEBI" id="CHEBI:18420"/>
    </cofactor>
    <text evidence="1">Binds 1 Mg(2+) ion per subunit.</text>
</comment>
<comment type="subunit">
    <text evidence="1">Homodimer.</text>
</comment>
<comment type="similarity">
    <text evidence="1">Belongs to the HAM1 NTPase family.</text>
</comment>
<accession>P99094</accession>
<accession>Q99UV5</accession>
<dbReference type="EC" id="3.6.1.66" evidence="1"/>
<dbReference type="EMBL" id="BA000018">
    <property type="protein sequence ID" value="BAB42247.1"/>
    <property type="molecule type" value="Genomic_DNA"/>
</dbReference>
<dbReference type="PIR" id="C89886">
    <property type="entry name" value="C89886"/>
</dbReference>
<dbReference type="RefSeq" id="WP_000659319.1">
    <property type="nucleotide sequence ID" value="NC_002745.2"/>
</dbReference>
<dbReference type="PDB" id="4BNQ">
    <property type="method" value="X-ray"/>
    <property type="resolution" value="2.28 A"/>
    <property type="chains" value="A/B=1-195"/>
</dbReference>
<dbReference type="PDBsum" id="4BNQ"/>
<dbReference type="SMR" id="P99094"/>
<dbReference type="EnsemblBacteria" id="BAB42247">
    <property type="protein sequence ID" value="BAB42247"/>
    <property type="gene ID" value="BAB42247"/>
</dbReference>
<dbReference type="KEGG" id="sau:SA0998"/>
<dbReference type="HOGENOM" id="CLU_082080_0_2_9"/>
<dbReference type="EvolutionaryTrace" id="P99094"/>
<dbReference type="GO" id="GO:0005829">
    <property type="term" value="C:cytosol"/>
    <property type="evidence" value="ECO:0007669"/>
    <property type="project" value="TreeGrafter"/>
</dbReference>
<dbReference type="GO" id="GO:0035870">
    <property type="term" value="F:dITP diphosphatase activity"/>
    <property type="evidence" value="ECO:0007669"/>
    <property type="project" value="RHEA"/>
</dbReference>
<dbReference type="GO" id="GO:0036220">
    <property type="term" value="F:ITP diphosphatase activity"/>
    <property type="evidence" value="ECO:0007669"/>
    <property type="project" value="UniProtKB-EC"/>
</dbReference>
<dbReference type="GO" id="GO:0046872">
    <property type="term" value="F:metal ion binding"/>
    <property type="evidence" value="ECO:0007669"/>
    <property type="project" value="UniProtKB-KW"/>
</dbReference>
<dbReference type="GO" id="GO:0000166">
    <property type="term" value="F:nucleotide binding"/>
    <property type="evidence" value="ECO:0007669"/>
    <property type="project" value="UniProtKB-KW"/>
</dbReference>
<dbReference type="GO" id="GO:0017111">
    <property type="term" value="F:ribonucleoside triphosphate phosphatase activity"/>
    <property type="evidence" value="ECO:0007669"/>
    <property type="project" value="InterPro"/>
</dbReference>
<dbReference type="GO" id="GO:0036222">
    <property type="term" value="F:XTP diphosphatase activity"/>
    <property type="evidence" value="ECO:0007669"/>
    <property type="project" value="RHEA"/>
</dbReference>
<dbReference type="GO" id="GO:0009117">
    <property type="term" value="P:nucleotide metabolic process"/>
    <property type="evidence" value="ECO:0007669"/>
    <property type="project" value="UniProtKB-KW"/>
</dbReference>
<dbReference type="GO" id="GO:0009146">
    <property type="term" value="P:purine nucleoside triphosphate catabolic process"/>
    <property type="evidence" value="ECO:0007669"/>
    <property type="project" value="UniProtKB-UniRule"/>
</dbReference>
<dbReference type="CDD" id="cd00515">
    <property type="entry name" value="HAM1"/>
    <property type="match status" value="1"/>
</dbReference>
<dbReference type="FunFam" id="3.90.950.10:FF:000001">
    <property type="entry name" value="dITP/XTP pyrophosphatase"/>
    <property type="match status" value="1"/>
</dbReference>
<dbReference type="Gene3D" id="3.90.950.10">
    <property type="match status" value="1"/>
</dbReference>
<dbReference type="HAMAP" id="MF_01405">
    <property type="entry name" value="Non_canon_purine_NTPase"/>
    <property type="match status" value="1"/>
</dbReference>
<dbReference type="InterPro" id="IPR020922">
    <property type="entry name" value="dITP/XTP_pyrophosphatase"/>
</dbReference>
<dbReference type="InterPro" id="IPR029001">
    <property type="entry name" value="ITPase-like_fam"/>
</dbReference>
<dbReference type="InterPro" id="IPR002637">
    <property type="entry name" value="RdgB/HAM1"/>
</dbReference>
<dbReference type="NCBIfam" id="NF011397">
    <property type="entry name" value="PRK14822.1"/>
    <property type="match status" value="1"/>
</dbReference>
<dbReference type="NCBIfam" id="TIGR00042">
    <property type="entry name" value="RdgB/HAM1 family non-canonical purine NTP pyrophosphatase"/>
    <property type="match status" value="1"/>
</dbReference>
<dbReference type="PANTHER" id="PTHR11067:SF9">
    <property type="entry name" value="INOSINE TRIPHOSPHATE PYROPHOSPHATASE"/>
    <property type="match status" value="1"/>
</dbReference>
<dbReference type="PANTHER" id="PTHR11067">
    <property type="entry name" value="INOSINE TRIPHOSPHATE PYROPHOSPHATASE/HAM1 PROTEIN"/>
    <property type="match status" value="1"/>
</dbReference>
<dbReference type="Pfam" id="PF01725">
    <property type="entry name" value="Ham1p_like"/>
    <property type="match status" value="1"/>
</dbReference>
<dbReference type="SUPFAM" id="SSF52972">
    <property type="entry name" value="ITPase-like"/>
    <property type="match status" value="1"/>
</dbReference>
<organism>
    <name type="scientific">Staphylococcus aureus (strain N315)</name>
    <dbReference type="NCBI Taxonomy" id="158879"/>
    <lineage>
        <taxon>Bacteria</taxon>
        <taxon>Bacillati</taxon>
        <taxon>Bacillota</taxon>
        <taxon>Bacilli</taxon>
        <taxon>Bacillales</taxon>
        <taxon>Staphylococcaceae</taxon>
        <taxon>Staphylococcus</taxon>
    </lineage>
</organism>
<keyword id="KW-0002">3D-structure</keyword>
<keyword id="KW-0378">Hydrolase</keyword>
<keyword id="KW-0460">Magnesium</keyword>
<keyword id="KW-0479">Metal-binding</keyword>
<keyword id="KW-0546">Nucleotide metabolism</keyword>
<keyword id="KW-0547">Nucleotide-binding</keyword>
<name>IXTPA_STAAN</name>
<gene>
    <name type="ordered locus">SA0998</name>
</gene>
<reference key="1">
    <citation type="journal article" date="2001" name="Lancet">
        <title>Whole genome sequencing of meticillin-resistant Staphylococcus aureus.</title>
        <authorList>
            <person name="Kuroda M."/>
            <person name="Ohta T."/>
            <person name="Uchiyama I."/>
            <person name="Baba T."/>
            <person name="Yuzawa H."/>
            <person name="Kobayashi I."/>
            <person name="Cui L."/>
            <person name="Oguchi A."/>
            <person name="Aoki K."/>
            <person name="Nagai Y."/>
            <person name="Lian J.-Q."/>
            <person name="Ito T."/>
            <person name="Kanamori M."/>
            <person name="Matsumaru H."/>
            <person name="Maruyama A."/>
            <person name="Murakami H."/>
            <person name="Hosoyama A."/>
            <person name="Mizutani-Ui Y."/>
            <person name="Takahashi N.K."/>
            <person name="Sawano T."/>
            <person name="Inoue R."/>
            <person name="Kaito C."/>
            <person name="Sekimizu K."/>
            <person name="Hirakawa H."/>
            <person name="Kuhara S."/>
            <person name="Goto S."/>
            <person name="Yabuzaki J."/>
            <person name="Kanehisa M."/>
            <person name="Yamashita A."/>
            <person name="Oshima K."/>
            <person name="Furuya K."/>
            <person name="Yoshino C."/>
            <person name="Shiba T."/>
            <person name="Hattori M."/>
            <person name="Ogasawara N."/>
            <person name="Hayashi H."/>
            <person name="Hiramatsu K."/>
        </authorList>
    </citation>
    <scope>NUCLEOTIDE SEQUENCE [LARGE SCALE GENOMIC DNA]</scope>
    <source>
        <strain>N315</strain>
    </source>
</reference>
<reference key="2">
    <citation type="journal article" date="2005" name="J. Microbiol. Methods">
        <title>Correlation of proteomic and transcriptomic profiles of Staphylococcus aureus during the post-exponential phase of growth.</title>
        <authorList>
            <person name="Scherl A."/>
            <person name="Francois P."/>
            <person name="Bento M."/>
            <person name="Deshusses J.M."/>
            <person name="Charbonnier Y."/>
            <person name="Converset V."/>
            <person name="Huyghe A."/>
            <person name="Walter N."/>
            <person name="Hoogland C."/>
            <person name="Appel R.D."/>
            <person name="Sanchez J.-C."/>
            <person name="Zimmermann-Ivol C.G."/>
            <person name="Corthals G.L."/>
            <person name="Hochstrasser D.F."/>
            <person name="Schrenzel J."/>
        </authorList>
    </citation>
    <scope>IDENTIFICATION BY MASS SPECTROMETRY</scope>
    <source>
        <strain>N315</strain>
    </source>
</reference>
<reference key="3">
    <citation type="submission" date="2007-10" db="UniProtKB">
        <title>Shotgun proteomic analysis of total and membrane protein extracts of S. aureus strain N315.</title>
        <authorList>
            <person name="Vaezzadeh A.R."/>
            <person name="Deshusses J."/>
            <person name="Lescuyer P."/>
            <person name="Hochstrasser D.F."/>
        </authorList>
    </citation>
    <scope>IDENTIFICATION BY MASS SPECTROMETRY [LARGE SCALE ANALYSIS]</scope>
    <source>
        <strain>N315</strain>
    </source>
</reference>
<sequence length="195" mass="21417">MKEIVIASNNQGKINDFKVIFPDYHVIGISELIPDFDVEETGSTFEENAILKSEAAAKALNKTVIADDSGLEVFALNGEPGIYSARYAGENKSDEANIEKLLNKLGNTTDRRAQFVCVISMSGPDMETKVFKGTVSGEIADGKYGENGFGYDPIFYVPKLDKTMAQLSKEQKGQISHRRNAINLLQAFLEGEKNV</sequence>
<evidence type="ECO:0000255" key="1">
    <source>
        <dbReference type="HAMAP-Rule" id="MF_01405"/>
    </source>
</evidence>
<evidence type="ECO:0007829" key="2">
    <source>
        <dbReference type="PDB" id="4BNQ"/>
    </source>
</evidence>
<protein>
    <recommendedName>
        <fullName evidence="1">dITP/XTP pyrophosphatase</fullName>
        <ecNumber evidence="1">3.6.1.66</ecNumber>
    </recommendedName>
    <alternativeName>
        <fullName evidence="1">Non-canonical purine NTP pyrophosphatase</fullName>
    </alternativeName>
    <alternativeName>
        <fullName evidence="1">Non-standard purine NTP pyrophosphatase</fullName>
    </alternativeName>
    <alternativeName>
        <fullName evidence="1">Nucleoside-triphosphate diphosphatase</fullName>
    </alternativeName>
    <alternativeName>
        <fullName evidence="1">Nucleoside-triphosphate pyrophosphatase</fullName>
        <shortName evidence="1">NTPase</shortName>
    </alternativeName>
</protein>
<proteinExistence type="evidence at protein level"/>
<feature type="chain" id="PRO_0000178229" description="dITP/XTP pyrophosphatase">
    <location>
        <begin position="1"/>
        <end position="195"/>
    </location>
</feature>
<feature type="active site" description="Proton acceptor" evidence="1">
    <location>
        <position position="68"/>
    </location>
</feature>
<feature type="binding site" evidence="1">
    <location>
        <begin position="8"/>
        <end position="13"/>
    </location>
    <ligand>
        <name>substrate</name>
    </ligand>
</feature>
<feature type="binding site" evidence="1">
    <location>
        <position position="39"/>
    </location>
    <ligand>
        <name>Mg(2+)</name>
        <dbReference type="ChEBI" id="CHEBI:18420"/>
    </ligand>
</feature>
<feature type="binding site" evidence="1">
    <location>
        <position position="68"/>
    </location>
    <ligand>
        <name>Mg(2+)</name>
        <dbReference type="ChEBI" id="CHEBI:18420"/>
    </ligand>
</feature>
<feature type="binding site" evidence="1">
    <location>
        <position position="69"/>
    </location>
    <ligand>
        <name>substrate</name>
    </ligand>
</feature>
<feature type="binding site" evidence="1">
    <location>
        <begin position="149"/>
        <end position="152"/>
    </location>
    <ligand>
        <name>substrate</name>
    </ligand>
</feature>
<feature type="binding site" evidence="1">
    <location>
        <position position="172"/>
    </location>
    <ligand>
        <name>substrate</name>
    </ligand>
</feature>
<feature type="binding site" evidence="1">
    <location>
        <begin position="177"/>
        <end position="178"/>
    </location>
    <ligand>
        <name>substrate</name>
    </ligand>
</feature>
<feature type="strand" evidence="2">
    <location>
        <begin position="3"/>
        <end position="6"/>
    </location>
</feature>
<feature type="helix" evidence="2">
    <location>
        <begin position="11"/>
        <end position="20"/>
    </location>
</feature>
<feature type="strand" evidence="2">
    <location>
        <begin position="24"/>
        <end position="28"/>
    </location>
</feature>
<feature type="helix" evidence="2">
    <location>
        <begin position="29"/>
        <end position="32"/>
    </location>
</feature>
<feature type="helix" evidence="2">
    <location>
        <begin position="45"/>
        <end position="60"/>
    </location>
</feature>
<feature type="strand" evidence="2">
    <location>
        <begin position="64"/>
        <end position="73"/>
    </location>
</feature>
<feature type="helix" evidence="2">
    <location>
        <begin position="74"/>
        <end position="76"/>
    </location>
</feature>
<feature type="helix" evidence="2">
    <location>
        <begin position="81"/>
        <end position="86"/>
    </location>
</feature>
<feature type="helix" evidence="2">
    <location>
        <begin position="94"/>
        <end position="104"/>
    </location>
</feature>
<feature type="strand" evidence="2">
    <location>
        <begin position="112"/>
        <end position="123"/>
    </location>
</feature>
<feature type="strand" evidence="2">
    <location>
        <begin position="126"/>
        <end position="139"/>
    </location>
</feature>
<feature type="helix" evidence="2">
    <location>
        <begin position="152"/>
        <end position="154"/>
    </location>
</feature>
<feature type="strand" evidence="2">
    <location>
        <begin position="155"/>
        <end position="157"/>
    </location>
</feature>
<feature type="helix" evidence="2">
    <location>
        <begin position="158"/>
        <end position="160"/>
    </location>
</feature>
<feature type="helix" evidence="2">
    <location>
        <begin position="164"/>
        <end position="166"/>
    </location>
</feature>
<feature type="helix" evidence="2">
    <location>
        <begin position="169"/>
        <end position="175"/>
    </location>
</feature>
<feature type="helix" evidence="2">
    <location>
        <begin position="177"/>
        <end position="191"/>
    </location>
</feature>
<feature type="turn" evidence="2">
    <location>
        <begin position="192"/>
        <end position="194"/>
    </location>
</feature>